<protein>
    <recommendedName>
        <fullName evidence="1">Lipoyl synthase</fullName>
        <ecNumber evidence="1">2.8.1.8</ecNumber>
    </recommendedName>
    <alternativeName>
        <fullName evidence="1">Lip-syn</fullName>
        <shortName evidence="1">LS</shortName>
    </alternativeName>
    <alternativeName>
        <fullName evidence="1">Lipoate synthase</fullName>
    </alternativeName>
    <alternativeName>
        <fullName evidence="1">Lipoic acid synthase</fullName>
    </alternativeName>
    <alternativeName>
        <fullName evidence="1">Sulfur insertion protein LipA</fullName>
    </alternativeName>
</protein>
<gene>
    <name evidence="1" type="primary">lipA</name>
    <name type="ordered locus">Noca_2299</name>
</gene>
<proteinExistence type="inferred from homology"/>
<sequence>MTQAPPSPQAEGRKLLRLEARNSETPIERKPEWIKTRAKMGPEYQHLQNLVKSEGLHTVCQEAGCPNIYECWEDREATFLIGGEQCTRRCDFCQIDTGRPKPLDRDEPRRVAESVRTMGLRYATITGVTRDDLIDEGAWLYAETVRQIHELNPGIGVENLIPDFSGKPDLLAQVFESRPEVLAHNLETVPRIFKRIRPAFRYDRSLDVLTQARDFGLVTKSNLILGLGETREEVSQALRDLHAAGCELLTITQYLRPSPRHHPVERWVKPEEFVELKDEADEVGFTGVMSGPLVRSSYRAGRLYRQAVEAREGVTA</sequence>
<reference key="1">
    <citation type="submission" date="2006-12" db="EMBL/GenBank/DDBJ databases">
        <title>Complete sequence of chromosome 1 of Nocardioides sp. JS614.</title>
        <authorList>
            <person name="Copeland A."/>
            <person name="Lucas S."/>
            <person name="Lapidus A."/>
            <person name="Barry K."/>
            <person name="Detter J.C."/>
            <person name="Glavina del Rio T."/>
            <person name="Hammon N."/>
            <person name="Israni S."/>
            <person name="Dalin E."/>
            <person name="Tice H."/>
            <person name="Pitluck S."/>
            <person name="Thompson L.S."/>
            <person name="Brettin T."/>
            <person name="Bruce D."/>
            <person name="Han C."/>
            <person name="Tapia R."/>
            <person name="Schmutz J."/>
            <person name="Larimer F."/>
            <person name="Land M."/>
            <person name="Hauser L."/>
            <person name="Kyrpides N."/>
            <person name="Kim E."/>
            <person name="Mattes T."/>
            <person name="Gossett J."/>
            <person name="Richardson P."/>
        </authorList>
    </citation>
    <scope>NUCLEOTIDE SEQUENCE [LARGE SCALE GENOMIC DNA]</scope>
    <source>
        <strain>ATCC BAA-499 / JS614</strain>
    </source>
</reference>
<name>LIPA_NOCSJ</name>
<accession>A1SJ19</accession>
<dbReference type="EC" id="2.8.1.8" evidence="1"/>
<dbReference type="EMBL" id="CP000509">
    <property type="protein sequence ID" value="ABL81804.1"/>
    <property type="molecule type" value="Genomic_DNA"/>
</dbReference>
<dbReference type="RefSeq" id="WP_011755746.1">
    <property type="nucleotide sequence ID" value="NC_008699.1"/>
</dbReference>
<dbReference type="SMR" id="A1SJ19"/>
<dbReference type="STRING" id="196162.Noca_2299"/>
<dbReference type="KEGG" id="nca:Noca_2299"/>
<dbReference type="eggNOG" id="COG0320">
    <property type="taxonomic scope" value="Bacteria"/>
</dbReference>
<dbReference type="HOGENOM" id="CLU_033144_2_1_11"/>
<dbReference type="OrthoDB" id="9787898at2"/>
<dbReference type="UniPathway" id="UPA00538">
    <property type="reaction ID" value="UER00593"/>
</dbReference>
<dbReference type="Proteomes" id="UP000000640">
    <property type="component" value="Chromosome"/>
</dbReference>
<dbReference type="GO" id="GO:0005737">
    <property type="term" value="C:cytoplasm"/>
    <property type="evidence" value="ECO:0007669"/>
    <property type="project" value="UniProtKB-SubCell"/>
</dbReference>
<dbReference type="GO" id="GO:0051539">
    <property type="term" value="F:4 iron, 4 sulfur cluster binding"/>
    <property type="evidence" value="ECO:0007669"/>
    <property type="project" value="UniProtKB-UniRule"/>
</dbReference>
<dbReference type="GO" id="GO:0016992">
    <property type="term" value="F:lipoate synthase activity"/>
    <property type="evidence" value="ECO:0007669"/>
    <property type="project" value="UniProtKB-UniRule"/>
</dbReference>
<dbReference type="GO" id="GO:0046872">
    <property type="term" value="F:metal ion binding"/>
    <property type="evidence" value="ECO:0007669"/>
    <property type="project" value="UniProtKB-KW"/>
</dbReference>
<dbReference type="CDD" id="cd01335">
    <property type="entry name" value="Radical_SAM"/>
    <property type="match status" value="1"/>
</dbReference>
<dbReference type="FunFam" id="3.20.20.70:FF:000116">
    <property type="entry name" value="Lipoyl synthase"/>
    <property type="match status" value="1"/>
</dbReference>
<dbReference type="Gene3D" id="3.20.20.70">
    <property type="entry name" value="Aldolase class I"/>
    <property type="match status" value="1"/>
</dbReference>
<dbReference type="HAMAP" id="MF_00206">
    <property type="entry name" value="Lipoyl_synth"/>
    <property type="match status" value="1"/>
</dbReference>
<dbReference type="InterPro" id="IPR013785">
    <property type="entry name" value="Aldolase_TIM"/>
</dbReference>
<dbReference type="InterPro" id="IPR006638">
    <property type="entry name" value="Elp3/MiaA/NifB-like_rSAM"/>
</dbReference>
<dbReference type="InterPro" id="IPR031691">
    <property type="entry name" value="LIAS_N"/>
</dbReference>
<dbReference type="InterPro" id="IPR003698">
    <property type="entry name" value="Lipoyl_synth"/>
</dbReference>
<dbReference type="InterPro" id="IPR007197">
    <property type="entry name" value="rSAM"/>
</dbReference>
<dbReference type="NCBIfam" id="TIGR00510">
    <property type="entry name" value="lipA"/>
    <property type="match status" value="1"/>
</dbReference>
<dbReference type="NCBIfam" id="NF004019">
    <property type="entry name" value="PRK05481.1"/>
    <property type="match status" value="1"/>
</dbReference>
<dbReference type="NCBIfam" id="NF009544">
    <property type="entry name" value="PRK12928.1"/>
    <property type="match status" value="1"/>
</dbReference>
<dbReference type="PANTHER" id="PTHR10949">
    <property type="entry name" value="LIPOYL SYNTHASE"/>
    <property type="match status" value="1"/>
</dbReference>
<dbReference type="PANTHER" id="PTHR10949:SF0">
    <property type="entry name" value="LIPOYL SYNTHASE, MITOCHONDRIAL"/>
    <property type="match status" value="1"/>
</dbReference>
<dbReference type="Pfam" id="PF16881">
    <property type="entry name" value="LIAS_N"/>
    <property type="match status" value="1"/>
</dbReference>
<dbReference type="Pfam" id="PF04055">
    <property type="entry name" value="Radical_SAM"/>
    <property type="match status" value="1"/>
</dbReference>
<dbReference type="PIRSF" id="PIRSF005963">
    <property type="entry name" value="Lipoyl_synth"/>
    <property type="match status" value="1"/>
</dbReference>
<dbReference type="SFLD" id="SFLDF00271">
    <property type="entry name" value="lipoyl_synthase"/>
    <property type="match status" value="1"/>
</dbReference>
<dbReference type="SFLD" id="SFLDS00029">
    <property type="entry name" value="Radical_SAM"/>
    <property type="match status" value="1"/>
</dbReference>
<dbReference type="SMART" id="SM00729">
    <property type="entry name" value="Elp3"/>
    <property type="match status" value="1"/>
</dbReference>
<dbReference type="SUPFAM" id="SSF102114">
    <property type="entry name" value="Radical SAM enzymes"/>
    <property type="match status" value="1"/>
</dbReference>
<dbReference type="PROSITE" id="PS51918">
    <property type="entry name" value="RADICAL_SAM"/>
    <property type="match status" value="1"/>
</dbReference>
<keyword id="KW-0004">4Fe-4S</keyword>
<keyword id="KW-0963">Cytoplasm</keyword>
<keyword id="KW-0408">Iron</keyword>
<keyword id="KW-0411">Iron-sulfur</keyword>
<keyword id="KW-0479">Metal-binding</keyword>
<keyword id="KW-1185">Reference proteome</keyword>
<keyword id="KW-0949">S-adenosyl-L-methionine</keyword>
<keyword id="KW-0808">Transferase</keyword>
<comment type="function">
    <text evidence="1">Catalyzes the radical-mediated insertion of two sulfur atoms into the C-6 and C-8 positions of the octanoyl moiety bound to the lipoyl domains of lipoate-dependent enzymes, thereby converting the octanoylated domains into lipoylated derivatives.</text>
</comment>
<comment type="catalytic activity">
    <reaction evidence="1">
        <text>[[Fe-S] cluster scaffold protein carrying a second [4Fe-4S](2+) cluster] + N(6)-octanoyl-L-lysyl-[protein] + 2 oxidized [2Fe-2S]-[ferredoxin] + 2 S-adenosyl-L-methionine + 4 H(+) = [[Fe-S] cluster scaffold protein] + N(6)-[(R)-dihydrolipoyl]-L-lysyl-[protein] + 4 Fe(3+) + 2 hydrogen sulfide + 2 5'-deoxyadenosine + 2 L-methionine + 2 reduced [2Fe-2S]-[ferredoxin]</text>
        <dbReference type="Rhea" id="RHEA:16585"/>
        <dbReference type="Rhea" id="RHEA-COMP:9928"/>
        <dbReference type="Rhea" id="RHEA-COMP:10000"/>
        <dbReference type="Rhea" id="RHEA-COMP:10001"/>
        <dbReference type="Rhea" id="RHEA-COMP:10475"/>
        <dbReference type="Rhea" id="RHEA-COMP:14568"/>
        <dbReference type="Rhea" id="RHEA-COMP:14569"/>
        <dbReference type="ChEBI" id="CHEBI:15378"/>
        <dbReference type="ChEBI" id="CHEBI:17319"/>
        <dbReference type="ChEBI" id="CHEBI:29034"/>
        <dbReference type="ChEBI" id="CHEBI:29919"/>
        <dbReference type="ChEBI" id="CHEBI:33722"/>
        <dbReference type="ChEBI" id="CHEBI:33737"/>
        <dbReference type="ChEBI" id="CHEBI:33738"/>
        <dbReference type="ChEBI" id="CHEBI:57844"/>
        <dbReference type="ChEBI" id="CHEBI:59789"/>
        <dbReference type="ChEBI" id="CHEBI:78809"/>
        <dbReference type="ChEBI" id="CHEBI:83100"/>
        <dbReference type="EC" id="2.8.1.8"/>
    </reaction>
</comment>
<comment type="cofactor">
    <cofactor evidence="1">
        <name>[4Fe-4S] cluster</name>
        <dbReference type="ChEBI" id="CHEBI:49883"/>
    </cofactor>
    <text evidence="1">Binds 2 [4Fe-4S] clusters per subunit. One cluster is coordinated with 3 cysteines and an exchangeable S-adenosyl-L-methionine.</text>
</comment>
<comment type="pathway">
    <text evidence="1">Protein modification; protein lipoylation via endogenous pathway; protein N(6)-(lipoyl)lysine from octanoyl-[acyl-carrier-protein]: step 2/2.</text>
</comment>
<comment type="subcellular location">
    <subcellularLocation>
        <location evidence="1">Cytoplasm</location>
    </subcellularLocation>
</comment>
<comment type="similarity">
    <text evidence="1">Belongs to the radical SAM superfamily. Lipoyl synthase family.</text>
</comment>
<feature type="chain" id="PRO_1000012248" description="Lipoyl synthase">
    <location>
        <begin position="1"/>
        <end position="316"/>
    </location>
</feature>
<feature type="domain" description="Radical SAM core" evidence="2">
    <location>
        <begin position="72"/>
        <end position="286"/>
    </location>
</feature>
<feature type="binding site" evidence="1">
    <location>
        <position position="60"/>
    </location>
    <ligand>
        <name>[4Fe-4S] cluster</name>
        <dbReference type="ChEBI" id="CHEBI:49883"/>
        <label>1</label>
    </ligand>
</feature>
<feature type="binding site" evidence="1">
    <location>
        <position position="65"/>
    </location>
    <ligand>
        <name>[4Fe-4S] cluster</name>
        <dbReference type="ChEBI" id="CHEBI:49883"/>
        <label>1</label>
    </ligand>
</feature>
<feature type="binding site" evidence="1">
    <location>
        <position position="71"/>
    </location>
    <ligand>
        <name>[4Fe-4S] cluster</name>
        <dbReference type="ChEBI" id="CHEBI:49883"/>
        <label>1</label>
    </ligand>
</feature>
<feature type="binding site" evidence="1">
    <location>
        <position position="86"/>
    </location>
    <ligand>
        <name>[4Fe-4S] cluster</name>
        <dbReference type="ChEBI" id="CHEBI:49883"/>
        <label>2</label>
        <note>4Fe-4S-S-AdoMet</note>
    </ligand>
</feature>
<feature type="binding site" evidence="1">
    <location>
        <position position="90"/>
    </location>
    <ligand>
        <name>[4Fe-4S] cluster</name>
        <dbReference type="ChEBI" id="CHEBI:49883"/>
        <label>2</label>
        <note>4Fe-4S-S-AdoMet</note>
    </ligand>
</feature>
<feature type="binding site" evidence="1">
    <location>
        <position position="93"/>
    </location>
    <ligand>
        <name>[4Fe-4S] cluster</name>
        <dbReference type="ChEBI" id="CHEBI:49883"/>
        <label>2</label>
        <note>4Fe-4S-S-AdoMet</note>
    </ligand>
</feature>
<feature type="binding site" evidence="1">
    <location>
        <position position="297"/>
    </location>
    <ligand>
        <name>[4Fe-4S] cluster</name>
        <dbReference type="ChEBI" id="CHEBI:49883"/>
        <label>1</label>
    </ligand>
</feature>
<evidence type="ECO:0000255" key="1">
    <source>
        <dbReference type="HAMAP-Rule" id="MF_00206"/>
    </source>
</evidence>
<evidence type="ECO:0000255" key="2">
    <source>
        <dbReference type="PROSITE-ProRule" id="PRU01266"/>
    </source>
</evidence>
<organism>
    <name type="scientific">Nocardioides sp. (strain ATCC BAA-499 / JS614)</name>
    <dbReference type="NCBI Taxonomy" id="196162"/>
    <lineage>
        <taxon>Bacteria</taxon>
        <taxon>Bacillati</taxon>
        <taxon>Actinomycetota</taxon>
        <taxon>Actinomycetes</taxon>
        <taxon>Propionibacteriales</taxon>
        <taxon>Nocardioidaceae</taxon>
        <taxon>Nocardioides</taxon>
    </lineage>
</organism>